<reference key="1">
    <citation type="journal article" date="2001" name="DNA Res.">
        <title>Complete genome sequence of an aerobic thermoacidophilic Crenarchaeon, Sulfolobus tokodaii strain7.</title>
        <authorList>
            <person name="Kawarabayasi Y."/>
            <person name="Hino Y."/>
            <person name="Horikawa H."/>
            <person name="Jin-no K."/>
            <person name="Takahashi M."/>
            <person name="Sekine M."/>
            <person name="Baba S."/>
            <person name="Ankai A."/>
            <person name="Kosugi H."/>
            <person name="Hosoyama A."/>
            <person name="Fukui S."/>
            <person name="Nagai Y."/>
            <person name="Nishijima K."/>
            <person name="Otsuka R."/>
            <person name="Nakazawa H."/>
            <person name="Takamiya M."/>
            <person name="Kato Y."/>
            <person name="Yoshizawa T."/>
            <person name="Tanaka T."/>
            <person name="Kudoh Y."/>
            <person name="Yamazaki J."/>
            <person name="Kushida N."/>
            <person name="Oguchi A."/>
            <person name="Aoki K."/>
            <person name="Masuda S."/>
            <person name="Yanagii M."/>
            <person name="Nishimura M."/>
            <person name="Yamagishi A."/>
            <person name="Oshima T."/>
            <person name="Kikuchi H."/>
        </authorList>
    </citation>
    <scope>NUCLEOTIDE SEQUENCE [LARGE SCALE GENOMIC DNA]</scope>
    <source>
        <strain>DSM 16993 / JCM 10545 / NBRC 100140 / 7</strain>
    </source>
</reference>
<proteinExistence type="inferred from homology"/>
<organism>
    <name type="scientific">Sulfurisphaera tokodaii (strain DSM 16993 / JCM 10545 / NBRC 100140 / 7)</name>
    <name type="common">Sulfolobus tokodaii</name>
    <dbReference type="NCBI Taxonomy" id="273063"/>
    <lineage>
        <taxon>Archaea</taxon>
        <taxon>Thermoproteota</taxon>
        <taxon>Thermoprotei</taxon>
        <taxon>Sulfolobales</taxon>
        <taxon>Sulfolobaceae</taxon>
        <taxon>Sulfurisphaera</taxon>
    </lineage>
</organism>
<gene>
    <name evidence="1" type="primary">pyrF</name>
    <name type="ordered locus">STK_14820</name>
</gene>
<accession>Q970X0</accession>
<dbReference type="EC" id="4.1.1.23" evidence="1"/>
<dbReference type="EMBL" id="BA000023">
    <property type="protein sequence ID" value="BAB66553.1"/>
    <property type="molecule type" value="Genomic_DNA"/>
</dbReference>
<dbReference type="RefSeq" id="WP_010979531.1">
    <property type="nucleotide sequence ID" value="NC_003106.2"/>
</dbReference>
<dbReference type="SMR" id="Q970X0"/>
<dbReference type="STRING" id="273063.STK_14820"/>
<dbReference type="GeneID" id="1459517"/>
<dbReference type="KEGG" id="sto:STK_14820"/>
<dbReference type="PATRIC" id="fig|273063.9.peg.1689"/>
<dbReference type="eggNOG" id="arCOG00081">
    <property type="taxonomic scope" value="Archaea"/>
</dbReference>
<dbReference type="OrthoDB" id="94124at2157"/>
<dbReference type="UniPathway" id="UPA00070">
    <property type="reaction ID" value="UER00120"/>
</dbReference>
<dbReference type="Proteomes" id="UP000001015">
    <property type="component" value="Chromosome"/>
</dbReference>
<dbReference type="GO" id="GO:0005829">
    <property type="term" value="C:cytosol"/>
    <property type="evidence" value="ECO:0007669"/>
    <property type="project" value="TreeGrafter"/>
</dbReference>
<dbReference type="GO" id="GO:0004590">
    <property type="term" value="F:orotidine-5'-phosphate decarboxylase activity"/>
    <property type="evidence" value="ECO:0007669"/>
    <property type="project" value="UniProtKB-UniRule"/>
</dbReference>
<dbReference type="GO" id="GO:0006207">
    <property type="term" value="P:'de novo' pyrimidine nucleobase biosynthetic process"/>
    <property type="evidence" value="ECO:0007669"/>
    <property type="project" value="InterPro"/>
</dbReference>
<dbReference type="GO" id="GO:0044205">
    <property type="term" value="P:'de novo' UMP biosynthetic process"/>
    <property type="evidence" value="ECO:0007669"/>
    <property type="project" value="UniProtKB-UniRule"/>
</dbReference>
<dbReference type="CDD" id="cd04725">
    <property type="entry name" value="OMP_decarboxylase_like"/>
    <property type="match status" value="1"/>
</dbReference>
<dbReference type="Gene3D" id="3.20.20.70">
    <property type="entry name" value="Aldolase class I"/>
    <property type="match status" value="1"/>
</dbReference>
<dbReference type="HAMAP" id="MF_01200_A">
    <property type="entry name" value="OMPdecase_type1_A"/>
    <property type="match status" value="1"/>
</dbReference>
<dbReference type="InterPro" id="IPR013785">
    <property type="entry name" value="Aldolase_TIM"/>
</dbReference>
<dbReference type="InterPro" id="IPR014732">
    <property type="entry name" value="OMPdecase"/>
</dbReference>
<dbReference type="InterPro" id="IPR047595">
    <property type="entry name" value="OMPdecase_arc"/>
</dbReference>
<dbReference type="InterPro" id="IPR018089">
    <property type="entry name" value="OMPdecase_AS"/>
</dbReference>
<dbReference type="InterPro" id="IPR001754">
    <property type="entry name" value="OMPdeCOase_dom"/>
</dbReference>
<dbReference type="InterPro" id="IPR011060">
    <property type="entry name" value="RibuloseP-bd_barrel"/>
</dbReference>
<dbReference type="PANTHER" id="PTHR32119">
    <property type="entry name" value="OROTIDINE 5'-PHOSPHATE DECARBOXYLASE"/>
    <property type="match status" value="1"/>
</dbReference>
<dbReference type="PANTHER" id="PTHR32119:SF2">
    <property type="entry name" value="OROTIDINE 5'-PHOSPHATE DECARBOXYLASE"/>
    <property type="match status" value="1"/>
</dbReference>
<dbReference type="Pfam" id="PF00215">
    <property type="entry name" value="OMPdecase"/>
    <property type="match status" value="1"/>
</dbReference>
<dbReference type="SMART" id="SM00934">
    <property type="entry name" value="OMPdecase"/>
    <property type="match status" value="1"/>
</dbReference>
<dbReference type="SUPFAM" id="SSF51366">
    <property type="entry name" value="Ribulose-phoshate binding barrel"/>
    <property type="match status" value="1"/>
</dbReference>
<dbReference type="PROSITE" id="PS00156">
    <property type="entry name" value="OMPDECASE"/>
    <property type="match status" value="1"/>
</dbReference>
<name>PYRF_SULTO</name>
<comment type="function">
    <text evidence="1">Catalyzes the decarboxylation of orotidine 5'-monophosphate (OMP) to uridine 5'-monophosphate (UMP).</text>
</comment>
<comment type="catalytic activity">
    <reaction evidence="1">
        <text>orotidine 5'-phosphate + H(+) = UMP + CO2</text>
        <dbReference type="Rhea" id="RHEA:11596"/>
        <dbReference type="ChEBI" id="CHEBI:15378"/>
        <dbReference type="ChEBI" id="CHEBI:16526"/>
        <dbReference type="ChEBI" id="CHEBI:57538"/>
        <dbReference type="ChEBI" id="CHEBI:57865"/>
        <dbReference type="EC" id="4.1.1.23"/>
    </reaction>
</comment>
<comment type="pathway">
    <text evidence="1">Pyrimidine metabolism; UMP biosynthesis via de novo pathway; UMP from orotate: step 2/2.</text>
</comment>
<comment type="subunit">
    <text evidence="1">Homodimer.</text>
</comment>
<comment type="similarity">
    <text evidence="1">Belongs to the OMP decarboxylase family. Type 1 subfamily.</text>
</comment>
<feature type="chain" id="PRO_0000134619" description="Orotidine 5'-phosphate decarboxylase">
    <location>
        <begin position="1"/>
        <end position="213"/>
    </location>
</feature>
<feature type="active site" description="Proton donor" evidence="1">
    <location>
        <position position="54"/>
    </location>
</feature>
<feature type="binding site" evidence="1">
    <location>
        <position position="6"/>
    </location>
    <ligand>
        <name>substrate</name>
    </ligand>
</feature>
<feature type="binding site" evidence="1">
    <location>
        <position position="25"/>
    </location>
    <ligand>
        <name>substrate</name>
    </ligand>
</feature>
<feature type="binding site" evidence="1">
    <location>
        <begin position="52"/>
        <end position="61"/>
    </location>
    <ligand>
        <name>substrate</name>
    </ligand>
</feature>
<feature type="binding site" evidence="1">
    <location>
        <position position="109"/>
    </location>
    <ligand>
        <name>substrate</name>
    </ligand>
</feature>
<feature type="binding site" evidence="1">
    <location>
        <begin position="158"/>
        <end position="168"/>
    </location>
    <ligand>
        <name>substrate</name>
    </ligand>
</feature>
<feature type="binding site" evidence="1">
    <location>
        <position position="181"/>
    </location>
    <ligand>
        <name>substrate</name>
    </ligand>
</feature>
<feature type="binding site" evidence="1">
    <location>
        <position position="182"/>
    </location>
    <ligand>
        <name>substrate</name>
    </ligand>
</feature>
<sequence length="213" mass="24272">MILSLDRQIPLSTLSEINKYIHKVKIGYPLILENIEYLDDIVKLHWDEIIFDLKLADIDNTMVLIVSKFINYADSFIAHSFIGIEGALDKLSEFLKNQNKSLYLVLSMSHKGWNDEFYPYLKNIAKTIDPKGFVVGATRPNMIRIVRNDFRDKIIISPGVGAQGAMIGDAICNGADYEIIGRSIYESKDPVTETKKIIETQEVKINECKRTEN</sequence>
<evidence type="ECO:0000255" key="1">
    <source>
        <dbReference type="HAMAP-Rule" id="MF_01200"/>
    </source>
</evidence>
<protein>
    <recommendedName>
        <fullName evidence="1">Orotidine 5'-phosphate decarboxylase</fullName>
        <ecNumber evidence="1">4.1.1.23</ecNumber>
    </recommendedName>
    <alternativeName>
        <fullName evidence="1">OMP decarboxylase</fullName>
        <shortName evidence="1">OMPDCase</shortName>
        <shortName evidence="1">OMPdecase</shortName>
    </alternativeName>
</protein>
<keyword id="KW-0210">Decarboxylase</keyword>
<keyword id="KW-0456">Lyase</keyword>
<keyword id="KW-0665">Pyrimidine biosynthesis</keyword>
<keyword id="KW-1185">Reference proteome</keyword>